<geneLocation type="chloroplast"/>
<proteinExistence type="uncertain"/>
<comment type="subcellular location">
    <subcellularLocation>
        <location>Plastid</location>
        <location>Chloroplast</location>
    </subcellularLocation>
</comment>
<comment type="similarity">
    <text evidence="1">Belongs to the ycf15 family.</text>
</comment>
<comment type="caution">
    <text evidence="1">Could be the product of a pseudogene.</text>
</comment>
<sequence length="87" mass="10518">METLVSSIFWTLAPWKNMLLLKHGRIEILDQNTMYGWYELPKQEFLSSKQPVQIFTTKKYWILFRIGPERRRKAGMPTGVYYIEFTR</sequence>
<organism>
    <name type="scientific">Nicotiana tomentosiformis</name>
    <name type="common">Tobacco</name>
    <dbReference type="NCBI Taxonomy" id="4098"/>
    <lineage>
        <taxon>Eukaryota</taxon>
        <taxon>Viridiplantae</taxon>
        <taxon>Streptophyta</taxon>
        <taxon>Embryophyta</taxon>
        <taxon>Tracheophyta</taxon>
        <taxon>Spermatophyta</taxon>
        <taxon>Magnoliopsida</taxon>
        <taxon>eudicotyledons</taxon>
        <taxon>Gunneridae</taxon>
        <taxon>Pentapetalae</taxon>
        <taxon>asterids</taxon>
        <taxon>lamiids</taxon>
        <taxon>Solanales</taxon>
        <taxon>Solanaceae</taxon>
        <taxon>Nicotianoideae</taxon>
        <taxon>Nicotianeae</taxon>
        <taxon>Nicotiana</taxon>
    </lineage>
</organism>
<evidence type="ECO:0000305" key="1"/>
<name>YCF15_NICTO</name>
<dbReference type="EMBL" id="AB240139">
    <property type="protein sequence ID" value="BAE48048.1"/>
    <property type="molecule type" value="Genomic_DNA"/>
</dbReference>
<dbReference type="EMBL" id="AB240139">
    <property type="protein sequence ID" value="BAE48081.1"/>
    <property type="molecule type" value="Genomic_DNA"/>
</dbReference>
<dbReference type="GO" id="GO:0009507">
    <property type="term" value="C:chloroplast"/>
    <property type="evidence" value="ECO:0007669"/>
    <property type="project" value="UniProtKB-SubCell"/>
</dbReference>
<dbReference type="InterPro" id="IPR019645">
    <property type="entry name" value="Uncharacterised_Ycf15"/>
</dbReference>
<dbReference type="Pfam" id="PF10705">
    <property type="entry name" value="Ycf15"/>
    <property type="match status" value="1"/>
</dbReference>
<gene>
    <name type="primary">ycf15-A</name>
</gene>
<gene>
    <name type="primary">ycf15-B</name>
</gene>
<accession>Q33BV4</accession>
<reference key="1">
    <citation type="journal article" date="2006" name="Mol. Genet. Genomics">
        <title>The chloroplast genome of Nicotiana sylvestris and Nicotiana tomentosiformis: complete sequencing confirms that the Nicotiana sylvestris progenitor is the maternal genome donor of Nicotiana tabacum.</title>
        <authorList>
            <person name="Yukawa M."/>
            <person name="Tsudzuki T."/>
            <person name="Sugiura M."/>
        </authorList>
    </citation>
    <scope>NUCLEOTIDE SEQUENCE [LARGE SCALE GENOMIC DNA]</scope>
</reference>
<feature type="chain" id="PRO_0000299587" description="Putative uncharacterized protein ycf15">
    <location>
        <begin position="1"/>
        <end position="87"/>
    </location>
</feature>
<protein>
    <recommendedName>
        <fullName>Putative uncharacterized protein ycf15</fullName>
    </recommendedName>
</protein>
<keyword id="KW-0150">Chloroplast</keyword>
<keyword id="KW-0934">Plastid</keyword>